<comment type="subcellular location">
    <subcellularLocation>
        <location evidence="3 4">Cell membrane</location>
        <topology evidence="1">Lipid-anchor</topology>
    </subcellularLocation>
</comment>
<comment type="miscellaneous">
    <text evidence="5">Present with 2250 molecules/cell in log phase SD medium.</text>
</comment>
<comment type="similarity">
    <text evidence="6">Belongs to the CYSTM1 family.</text>
</comment>
<comment type="caution">
    <text evidence="1">Was predicted to contain a transmembrane helix, however experiments suggest that this region of the protein is not buried in the plasma membrane and is palmitoylated.</text>
</comment>
<gene>
    <name type="ordered locus">YDL012C</name>
    <name type="ORF">D2880</name>
</gene>
<evidence type="ECO:0000250" key="1">
    <source>
        <dbReference type="UniProtKB" id="P38216"/>
    </source>
</evidence>
<evidence type="ECO:0000256" key="2">
    <source>
        <dbReference type="SAM" id="MobiDB-lite"/>
    </source>
</evidence>
<evidence type="ECO:0000269" key="3">
    <source>
    </source>
</evidence>
<evidence type="ECO:0000269" key="4">
    <source>
    </source>
</evidence>
<evidence type="ECO:0000269" key="5">
    <source>
    </source>
</evidence>
<evidence type="ECO:0000305" key="6"/>
<evidence type="ECO:0007744" key="7">
    <source>
    </source>
</evidence>
<evidence type="ECO:0007744" key="8">
    <source>
    </source>
</evidence>
<feature type="initiator methionine" description="Removed" evidence="8">
    <location>
        <position position="1"/>
    </location>
</feature>
<feature type="chain" id="PRO_0000248456" description="Lipid-anchored protein YDL012C">
    <location>
        <begin position="2"/>
        <end position="107"/>
    </location>
</feature>
<feature type="region of interest" description="Disordered" evidence="2">
    <location>
        <begin position="1"/>
        <end position="86"/>
    </location>
</feature>
<feature type="compositionally biased region" description="Polar residues" evidence="2">
    <location>
        <begin position="1"/>
        <end position="18"/>
    </location>
</feature>
<feature type="compositionally biased region" description="Low complexity" evidence="2">
    <location>
        <begin position="35"/>
        <end position="81"/>
    </location>
</feature>
<feature type="modified residue" description="N-acetylserine" evidence="8">
    <location>
        <position position="2"/>
    </location>
</feature>
<feature type="cross-link" description="Glycyl lysine isopeptide (Lys-Gly) (interchain with G-Cter in ubiquitin)" evidence="7">
    <location>
        <position position="13"/>
    </location>
</feature>
<sequence length="107" mass="12175">MSAQDYYGNSASKQSYSRPSAPPPGYETASRGYAPSQSQQNYYPPQQQQQQYQQQPQYYQQQQPQYYQQHPQQPIYVQQQPASSGNEDCLAGCLAGLCLCCTLDMLF</sequence>
<organism>
    <name type="scientific">Saccharomyces cerevisiae (strain ATCC 204508 / S288c)</name>
    <name type="common">Baker's yeast</name>
    <dbReference type="NCBI Taxonomy" id="559292"/>
    <lineage>
        <taxon>Eukaryota</taxon>
        <taxon>Fungi</taxon>
        <taxon>Dikarya</taxon>
        <taxon>Ascomycota</taxon>
        <taxon>Saccharomycotina</taxon>
        <taxon>Saccharomycetes</taxon>
        <taxon>Saccharomycetales</taxon>
        <taxon>Saccharomycetaceae</taxon>
        <taxon>Saccharomyces</taxon>
    </lineage>
</organism>
<protein>
    <recommendedName>
        <fullName evidence="1">Lipid-anchored protein YDL012C</fullName>
    </recommendedName>
    <alternativeName>
        <fullName evidence="1">C-terminally palmitoylated protein CPP1</fullName>
    </alternativeName>
    <alternativeName>
        <fullName evidence="1">Cysteine-rich protein CPP1</fullName>
    </alternativeName>
</protein>
<accession>Q12489</accession>
<accession>D6VRX7</accession>
<reference key="1">
    <citation type="journal article" date="1997" name="Nature">
        <title>The nucleotide sequence of Saccharomyces cerevisiae chromosome IV.</title>
        <authorList>
            <person name="Jacq C."/>
            <person name="Alt-Moerbe J."/>
            <person name="Andre B."/>
            <person name="Arnold W."/>
            <person name="Bahr A."/>
            <person name="Ballesta J.P.G."/>
            <person name="Bargues M."/>
            <person name="Baron L."/>
            <person name="Becker A."/>
            <person name="Biteau N."/>
            <person name="Bloecker H."/>
            <person name="Blugeon C."/>
            <person name="Boskovic J."/>
            <person name="Brandt P."/>
            <person name="Brueckner M."/>
            <person name="Buitrago M.J."/>
            <person name="Coster F."/>
            <person name="Delaveau T."/>
            <person name="del Rey F."/>
            <person name="Dujon B."/>
            <person name="Eide L.G."/>
            <person name="Garcia-Cantalejo J.M."/>
            <person name="Goffeau A."/>
            <person name="Gomez-Peris A."/>
            <person name="Granotier C."/>
            <person name="Hanemann V."/>
            <person name="Hankeln T."/>
            <person name="Hoheisel J.D."/>
            <person name="Jaeger W."/>
            <person name="Jimenez A."/>
            <person name="Jonniaux J.-L."/>
            <person name="Kraemer C."/>
            <person name="Kuester H."/>
            <person name="Laamanen P."/>
            <person name="Legros Y."/>
            <person name="Louis E.J."/>
            <person name="Moeller-Rieker S."/>
            <person name="Monnet A."/>
            <person name="Moro M."/>
            <person name="Mueller-Auer S."/>
            <person name="Nussbaumer B."/>
            <person name="Paricio N."/>
            <person name="Paulin L."/>
            <person name="Perea J."/>
            <person name="Perez-Alonso M."/>
            <person name="Perez-Ortin J.E."/>
            <person name="Pohl T.M."/>
            <person name="Prydz H."/>
            <person name="Purnelle B."/>
            <person name="Rasmussen S.W."/>
            <person name="Remacha M.A."/>
            <person name="Revuelta J.L."/>
            <person name="Rieger M."/>
            <person name="Salom D."/>
            <person name="Saluz H.P."/>
            <person name="Saiz J.E."/>
            <person name="Saren A.-M."/>
            <person name="Schaefer M."/>
            <person name="Scharfe M."/>
            <person name="Schmidt E.R."/>
            <person name="Schneider C."/>
            <person name="Scholler P."/>
            <person name="Schwarz S."/>
            <person name="Soler-Mira A."/>
            <person name="Urrestarazu L.A."/>
            <person name="Verhasselt P."/>
            <person name="Vissers S."/>
            <person name="Voet M."/>
            <person name="Volckaert G."/>
            <person name="Wagner G."/>
            <person name="Wambutt R."/>
            <person name="Wedler E."/>
            <person name="Wedler H."/>
            <person name="Woelfl S."/>
            <person name="Harris D.E."/>
            <person name="Bowman S."/>
            <person name="Brown D."/>
            <person name="Churcher C.M."/>
            <person name="Connor R."/>
            <person name="Dedman K."/>
            <person name="Gentles S."/>
            <person name="Hamlin N."/>
            <person name="Hunt S."/>
            <person name="Jones L."/>
            <person name="McDonald S."/>
            <person name="Murphy L.D."/>
            <person name="Niblett D."/>
            <person name="Odell C."/>
            <person name="Oliver K."/>
            <person name="Rajandream M.A."/>
            <person name="Richards C."/>
            <person name="Shore L."/>
            <person name="Walsh S.V."/>
            <person name="Barrell B.G."/>
            <person name="Dietrich F.S."/>
            <person name="Mulligan J.T."/>
            <person name="Allen E."/>
            <person name="Araujo R."/>
            <person name="Aviles E."/>
            <person name="Berno A."/>
            <person name="Carpenter J."/>
            <person name="Chen E."/>
            <person name="Cherry J.M."/>
            <person name="Chung E."/>
            <person name="Duncan M."/>
            <person name="Hunicke-Smith S."/>
            <person name="Hyman R.W."/>
            <person name="Komp C."/>
            <person name="Lashkari D."/>
            <person name="Lew H."/>
            <person name="Lin D."/>
            <person name="Mosedale D."/>
            <person name="Nakahara K."/>
            <person name="Namath A."/>
            <person name="Oefner P."/>
            <person name="Oh C."/>
            <person name="Petel F.X."/>
            <person name="Roberts D."/>
            <person name="Schramm S."/>
            <person name="Schroeder M."/>
            <person name="Shogren T."/>
            <person name="Shroff N."/>
            <person name="Winant A."/>
            <person name="Yelton M.A."/>
            <person name="Botstein D."/>
            <person name="Davis R.W."/>
            <person name="Johnston M."/>
            <person name="Andrews S."/>
            <person name="Brinkman R."/>
            <person name="Cooper J."/>
            <person name="Ding H."/>
            <person name="Du Z."/>
            <person name="Favello A."/>
            <person name="Fulton L."/>
            <person name="Gattung S."/>
            <person name="Greco T."/>
            <person name="Hallsworth K."/>
            <person name="Hawkins J."/>
            <person name="Hillier L.W."/>
            <person name="Jier M."/>
            <person name="Johnson D."/>
            <person name="Johnston L."/>
            <person name="Kirsten J."/>
            <person name="Kucaba T."/>
            <person name="Langston Y."/>
            <person name="Latreille P."/>
            <person name="Le T."/>
            <person name="Mardis E."/>
            <person name="Menezes S."/>
            <person name="Miller N."/>
            <person name="Nhan M."/>
            <person name="Pauley A."/>
            <person name="Peluso D."/>
            <person name="Rifkin L."/>
            <person name="Riles L."/>
            <person name="Taich A."/>
            <person name="Trevaskis E."/>
            <person name="Vignati D."/>
            <person name="Wilcox L."/>
            <person name="Wohldman P."/>
            <person name="Vaudin M."/>
            <person name="Wilson R."/>
            <person name="Waterston R."/>
            <person name="Albermann K."/>
            <person name="Hani J."/>
            <person name="Heumann K."/>
            <person name="Kleine K."/>
            <person name="Mewes H.-W."/>
            <person name="Zollner A."/>
            <person name="Zaccaria P."/>
        </authorList>
    </citation>
    <scope>NUCLEOTIDE SEQUENCE [LARGE SCALE GENOMIC DNA]</scope>
    <source>
        <strain>ATCC 204508 / S288c</strain>
    </source>
</reference>
<reference key="2">
    <citation type="journal article" date="2014" name="G3 (Bethesda)">
        <title>The reference genome sequence of Saccharomyces cerevisiae: Then and now.</title>
        <authorList>
            <person name="Engel S.R."/>
            <person name="Dietrich F.S."/>
            <person name="Fisk D.G."/>
            <person name="Binkley G."/>
            <person name="Balakrishnan R."/>
            <person name="Costanzo M.C."/>
            <person name="Dwight S.S."/>
            <person name="Hitz B.C."/>
            <person name="Karra K."/>
            <person name="Nash R.S."/>
            <person name="Weng S."/>
            <person name="Wong E.D."/>
            <person name="Lloyd P."/>
            <person name="Skrzypek M.S."/>
            <person name="Miyasato S.R."/>
            <person name="Simison M."/>
            <person name="Cherry J.M."/>
        </authorList>
    </citation>
    <scope>GENOME REANNOTATION</scope>
    <source>
        <strain>ATCC 204508 / S288c</strain>
    </source>
</reference>
<reference key="3">
    <citation type="journal article" date="2003" name="J. Biol. Chem.">
        <title>Bipartite signals mediate subcellular targeting of tail-anchored membrane proteins in Saccharomyces cerevisiae.</title>
        <authorList>
            <person name="Beilharz T."/>
            <person name="Egan B."/>
            <person name="Silver P.A."/>
            <person name="Hofmann K."/>
            <person name="Lithgow T."/>
        </authorList>
    </citation>
    <scope>SUBCELLULAR LOCATION</scope>
</reference>
<reference key="4">
    <citation type="journal article" date="2003" name="Nature">
        <title>Global analysis of protein localization in budding yeast.</title>
        <authorList>
            <person name="Huh W.-K."/>
            <person name="Falvo J.V."/>
            <person name="Gerke L.C."/>
            <person name="Carroll A.S."/>
            <person name="Howson R.W."/>
            <person name="Weissman J.S."/>
            <person name="O'Shea E.K."/>
        </authorList>
    </citation>
    <scope>SUBCELLULAR LOCATION [LARGE SCALE ANALYSIS]</scope>
</reference>
<reference key="5">
    <citation type="journal article" date="2003" name="Nature">
        <title>Global analysis of protein expression in yeast.</title>
        <authorList>
            <person name="Ghaemmaghami S."/>
            <person name="Huh W.-K."/>
            <person name="Bower K."/>
            <person name="Howson R.W."/>
            <person name="Belle A."/>
            <person name="Dephoure N."/>
            <person name="O'Shea E.K."/>
            <person name="Weissman J.S."/>
        </authorList>
    </citation>
    <scope>LEVEL OF PROTEIN EXPRESSION [LARGE SCALE ANALYSIS]</scope>
</reference>
<reference key="6">
    <citation type="journal article" date="2012" name="Proc. Natl. Acad. Sci. U.S.A.">
        <title>N-terminal acetylome analyses and functional insights of the N-terminal acetyltransferase NatB.</title>
        <authorList>
            <person name="Van Damme P."/>
            <person name="Lasa M."/>
            <person name="Polevoda B."/>
            <person name="Gazquez C."/>
            <person name="Elosegui-Artola A."/>
            <person name="Kim D.S."/>
            <person name="De Juan-Pardo E."/>
            <person name="Demeyer K."/>
            <person name="Hole K."/>
            <person name="Larrea E."/>
            <person name="Timmerman E."/>
            <person name="Prieto J."/>
            <person name="Arnesen T."/>
            <person name="Sherman F."/>
            <person name="Gevaert K."/>
            <person name="Aldabe R."/>
        </authorList>
    </citation>
    <scope>ACETYLATION [LARGE SCALE ANALYSIS] AT SER-2</scope>
    <scope>CLEAVAGE OF INITIATOR METHIONINE [LARGE SCALE ANALYSIS]</scope>
    <scope>IDENTIFICATION BY MASS SPECTROMETRY [LARGE SCALE ANALYSIS]</scope>
</reference>
<reference key="7">
    <citation type="journal article" date="2012" name="Proteomics">
        <title>Sites of ubiquitin attachment in Saccharomyces cerevisiae.</title>
        <authorList>
            <person name="Starita L.M."/>
            <person name="Lo R.S."/>
            <person name="Eng J.K."/>
            <person name="von Haller P.D."/>
            <person name="Fields S."/>
        </authorList>
    </citation>
    <scope>UBIQUITINATION [LARGE SCALE ANALYSIS] AT LYS-13</scope>
    <scope>IDENTIFICATION BY MASS SPECTROMETRY [LARGE SCALE ANALYSIS]</scope>
</reference>
<dbReference type="EMBL" id="Z74060">
    <property type="protein sequence ID" value="CAA98569.1"/>
    <property type="molecule type" value="Genomic_DNA"/>
</dbReference>
<dbReference type="EMBL" id="Z48432">
    <property type="protein sequence ID" value="CAA88347.1"/>
    <property type="molecule type" value="Genomic_DNA"/>
</dbReference>
<dbReference type="EMBL" id="BK006938">
    <property type="protein sequence ID" value="DAA11837.1"/>
    <property type="molecule type" value="Genomic_DNA"/>
</dbReference>
<dbReference type="PIR" id="S52507">
    <property type="entry name" value="S52507"/>
</dbReference>
<dbReference type="RefSeq" id="NP_010272.1">
    <property type="nucleotide sequence ID" value="NM_001180071.1"/>
</dbReference>
<dbReference type="SMR" id="Q12489"/>
<dbReference type="BioGRID" id="32042">
    <property type="interactions" value="90"/>
</dbReference>
<dbReference type="DIP" id="DIP-1783N"/>
<dbReference type="FunCoup" id="Q12489">
    <property type="interactions" value="50"/>
</dbReference>
<dbReference type="IntAct" id="Q12489">
    <property type="interactions" value="9"/>
</dbReference>
<dbReference type="MINT" id="Q12489"/>
<dbReference type="STRING" id="4932.YDL012C"/>
<dbReference type="iPTMnet" id="Q12489"/>
<dbReference type="PaxDb" id="4932-YDL012C"/>
<dbReference type="PeptideAtlas" id="Q12489"/>
<dbReference type="EnsemblFungi" id="YDL012C_mRNA">
    <property type="protein sequence ID" value="YDL012C"/>
    <property type="gene ID" value="YDL012C"/>
</dbReference>
<dbReference type="GeneID" id="851550"/>
<dbReference type="KEGG" id="sce:YDL012C"/>
<dbReference type="AGR" id="SGD:S000002170"/>
<dbReference type="SGD" id="S000002170">
    <property type="gene designation" value="YDL012C"/>
</dbReference>
<dbReference type="VEuPathDB" id="FungiDB:YDL012C"/>
<dbReference type="eggNOG" id="ENOG502S7AZ">
    <property type="taxonomic scope" value="Eukaryota"/>
</dbReference>
<dbReference type="GeneTree" id="ENSGT00940000176418"/>
<dbReference type="HOGENOM" id="CLU_162803_0_0_1"/>
<dbReference type="InParanoid" id="Q12489"/>
<dbReference type="OMA" id="PQHKDDS"/>
<dbReference type="OrthoDB" id="4070117at2759"/>
<dbReference type="BioCyc" id="YEAST:G3O-29442-MONOMER"/>
<dbReference type="BioGRID-ORCS" id="851550">
    <property type="hits" value="2 hits in 10 CRISPR screens"/>
</dbReference>
<dbReference type="PRO" id="PR:Q12489"/>
<dbReference type="Proteomes" id="UP000002311">
    <property type="component" value="Chromosome IV"/>
</dbReference>
<dbReference type="RNAct" id="Q12489">
    <property type="molecule type" value="protein"/>
</dbReference>
<dbReference type="GO" id="GO:0071944">
    <property type="term" value="C:cell periphery"/>
    <property type="evidence" value="ECO:0007005"/>
    <property type="project" value="SGD"/>
</dbReference>
<dbReference type="GO" id="GO:0005933">
    <property type="term" value="C:cellular bud"/>
    <property type="evidence" value="ECO:0007005"/>
    <property type="project" value="SGD"/>
</dbReference>
<dbReference type="GO" id="GO:0005886">
    <property type="term" value="C:plasma membrane"/>
    <property type="evidence" value="ECO:0000314"/>
    <property type="project" value="SGD"/>
</dbReference>
<dbReference type="InterPro" id="IPR043240">
    <property type="entry name" value="CYSTM1-like"/>
</dbReference>
<dbReference type="InterPro" id="IPR028144">
    <property type="entry name" value="CYSTM_dom"/>
</dbReference>
<dbReference type="PANTHER" id="PTHR47564">
    <property type="entry name" value="CYSTEINE-RICH AND TRANSMEMBRANE DOMAIN-CONTAINING PROTEIN 1"/>
    <property type="match status" value="1"/>
</dbReference>
<dbReference type="PANTHER" id="PTHR47564:SF1">
    <property type="entry name" value="CYSTEINE-RICH AND TRANSMEMBRANE DOMAIN-CONTAINING PROTEIN 1"/>
    <property type="match status" value="1"/>
</dbReference>
<dbReference type="Pfam" id="PF12734">
    <property type="entry name" value="CYSTM"/>
    <property type="match status" value="1"/>
</dbReference>
<name>YD012_YEAST</name>
<keyword id="KW-0007">Acetylation</keyword>
<keyword id="KW-1003">Cell membrane</keyword>
<keyword id="KW-1017">Isopeptide bond</keyword>
<keyword id="KW-0449">Lipoprotein</keyword>
<keyword id="KW-0472">Membrane</keyword>
<keyword id="KW-1185">Reference proteome</keyword>
<keyword id="KW-0832">Ubl conjugation</keyword>
<proteinExistence type="evidence at protein level"/>